<sequence>MKVLSFLIRQDHLLYLDIFAKQNNLTRSDAIRYAISVLDEESTPVSLVGFPGIKLVRTSVKLAENVISRIDRLAILSKITRSDVIRNAIYHLLINNAPKQLPPVTAQTEKKYGYVCPYCVSRFPTVRALKIHLKRRHNGFPWCPVCYKPLKNKNATNHFRRFTDPQHQFWYMISRKRYLSSHRKEAVKQ</sequence>
<proteinExistence type="predicted"/>
<organism>
    <name type="scientific">Acidianus two-tailed virus</name>
    <name type="common">ATV</name>
    <dbReference type="NCBI Taxonomy" id="315953"/>
    <lineage>
        <taxon>Viruses</taxon>
        <taxon>Viruses incertae sedis</taxon>
        <taxon>Bicaudaviridae</taxon>
        <taxon>Bicaudavirus</taxon>
    </lineage>
</organism>
<protein>
    <recommendedName>
        <fullName>Putative zinc finger protein ORF189</fullName>
    </recommendedName>
</protein>
<keyword id="KW-0479">Metal-binding</keyword>
<keyword id="KW-1185">Reference proteome</keyword>
<keyword id="KW-0862">Zinc</keyword>
<keyword id="KW-0863">Zinc-finger</keyword>
<dbReference type="EMBL" id="AJ888457">
    <property type="protein sequence ID" value="CAI59856.1"/>
    <property type="molecule type" value="Genomic_DNA"/>
</dbReference>
<dbReference type="RefSeq" id="YP_319859.1">
    <property type="nucleotide sequence ID" value="NC_007409.1"/>
</dbReference>
<dbReference type="GeneID" id="4484231"/>
<dbReference type="KEGG" id="vg:4484231"/>
<dbReference type="Proteomes" id="UP000002150">
    <property type="component" value="Genome"/>
</dbReference>
<dbReference type="GO" id="GO:0008270">
    <property type="term" value="F:zinc ion binding"/>
    <property type="evidence" value="ECO:0007669"/>
    <property type="project" value="UniProtKB-KW"/>
</dbReference>
<dbReference type="GO" id="GO:0006355">
    <property type="term" value="P:regulation of DNA-templated transcription"/>
    <property type="evidence" value="ECO:0007669"/>
    <property type="project" value="InterPro"/>
</dbReference>
<dbReference type="CDD" id="cd21631">
    <property type="entry name" value="RHH_CopG_NikR-like"/>
    <property type="match status" value="1"/>
</dbReference>
<dbReference type="Gene3D" id="3.30.160.60">
    <property type="entry name" value="Classic Zinc Finger"/>
    <property type="match status" value="1"/>
</dbReference>
<dbReference type="InterPro" id="IPR002145">
    <property type="entry name" value="CopG"/>
</dbReference>
<dbReference type="InterPro" id="IPR013087">
    <property type="entry name" value="Znf_C2H2_type"/>
</dbReference>
<dbReference type="Pfam" id="PF01402">
    <property type="entry name" value="RHH_1"/>
    <property type="match status" value="1"/>
</dbReference>
<dbReference type="SMART" id="SM00355">
    <property type="entry name" value="ZnF_C2H2"/>
    <property type="match status" value="1"/>
</dbReference>
<dbReference type="PROSITE" id="PS00028">
    <property type="entry name" value="ZINC_FINGER_C2H2_1"/>
    <property type="match status" value="1"/>
</dbReference>
<dbReference type="PROSITE" id="PS50157">
    <property type="entry name" value="ZINC_FINGER_C2H2_2"/>
    <property type="match status" value="1"/>
</dbReference>
<accession>Q3V4V8</accession>
<evidence type="ECO:0000255" key="1">
    <source>
        <dbReference type="PROSITE-ProRule" id="PRU00042"/>
    </source>
</evidence>
<reference key="1">
    <citation type="journal article" date="2005" name="Nature">
        <title>Virology: independent virus development outside a host.</title>
        <authorList>
            <person name="Haring M."/>
            <person name="Vestergaard G."/>
            <person name="Rachel R."/>
            <person name="Chen L."/>
            <person name="Garrett R.A."/>
            <person name="Prangishvili D."/>
        </authorList>
    </citation>
    <scope>NUCLEOTIDE SEQUENCE [GENOMIC DNA]</scope>
</reference>
<organismHost>
    <name type="scientific">Acidianus convivator</name>
    <dbReference type="NCBI Taxonomy" id="269667"/>
</organismHost>
<name>Y189_ATV</name>
<feature type="chain" id="PRO_0000389034" description="Putative zinc finger protein ORF189">
    <location>
        <begin position="1"/>
        <end position="189"/>
    </location>
</feature>
<feature type="zinc finger region" description="C2H2-type" evidence="1">
    <location>
        <begin position="114"/>
        <end position="137"/>
    </location>
</feature>